<reference key="1">
    <citation type="journal article" date="2005" name="Nature">
        <title>The genome of the social amoeba Dictyostelium discoideum.</title>
        <authorList>
            <person name="Eichinger L."/>
            <person name="Pachebat J.A."/>
            <person name="Gloeckner G."/>
            <person name="Rajandream M.A."/>
            <person name="Sucgang R."/>
            <person name="Berriman M."/>
            <person name="Song J."/>
            <person name="Olsen R."/>
            <person name="Szafranski K."/>
            <person name="Xu Q."/>
            <person name="Tunggal B."/>
            <person name="Kummerfeld S."/>
            <person name="Madera M."/>
            <person name="Konfortov B.A."/>
            <person name="Rivero F."/>
            <person name="Bankier A.T."/>
            <person name="Lehmann R."/>
            <person name="Hamlin N."/>
            <person name="Davies R."/>
            <person name="Gaudet P."/>
            <person name="Fey P."/>
            <person name="Pilcher K."/>
            <person name="Chen G."/>
            <person name="Saunders D."/>
            <person name="Sodergren E.J."/>
            <person name="Davis P."/>
            <person name="Kerhornou A."/>
            <person name="Nie X."/>
            <person name="Hall N."/>
            <person name="Anjard C."/>
            <person name="Hemphill L."/>
            <person name="Bason N."/>
            <person name="Farbrother P."/>
            <person name="Desany B."/>
            <person name="Just E."/>
            <person name="Morio T."/>
            <person name="Rost R."/>
            <person name="Churcher C.M."/>
            <person name="Cooper J."/>
            <person name="Haydock S."/>
            <person name="van Driessche N."/>
            <person name="Cronin A."/>
            <person name="Goodhead I."/>
            <person name="Muzny D.M."/>
            <person name="Mourier T."/>
            <person name="Pain A."/>
            <person name="Lu M."/>
            <person name="Harper D."/>
            <person name="Lindsay R."/>
            <person name="Hauser H."/>
            <person name="James K.D."/>
            <person name="Quiles M."/>
            <person name="Madan Babu M."/>
            <person name="Saito T."/>
            <person name="Buchrieser C."/>
            <person name="Wardroper A."/>
            <person name="Felder M."/>
            <person name="Thangavelu M."/>
            <person name="Johnson D."/>
            <person name="Knights A."/>
            <person name="Loulseged H."/>
            <person name="Mungall K.L."/>
            <person name="Oliver K."/>
            <person name="Price C."/>
            <person name="Quail M.A."/>
            <person name="Urushihara H."/>
            <person name="Hernandez J."/>
            <person name="Rabbinowitsch E."/>
            <person name="Steffen D."/>
            <person name="Sanders M."/>
            <person name="Ma J."/>
            <person name="Kohara Y."/>
            <person name="Sharp S."/>
            <person name="Simmonds M.N."/>
            <person name="Spiegler S."/>
            <person name="Tivey A."/>
            <person name="Sugano S."/>
            <person name="White B."/>
            <person name="Walker D."/>
            <person name="Woodward J.R."/>
            <person name="Winckler T."/>
            <person name="Tanaka Y."/>
            <person name="Shaulsky G."/>
            <person name="Schleicher M."/>
            <person name="Weinstock G.M."/>
            <person name="Rosenthal A."/>
            <person name="Cox E.C."/>
            <person name="Chisholm R.L."/>
            <person name="Gibbs R.A."/>
            <person name="Loomis W.F."/>
            <person name="Platzer M."/>
            <person name="Kay R.R."/>
            <person name="Williams J.G."/>
            <person name="Dear P.H."/>
            <person name="Noegel A.A."/>
            <person name="Barrell B.G."/>
            <person name="Kuspa A."/>
        </authorList>
    </citation>
    <scope>NUCLEOTIDE SEQUENCE [LARGE SCALE GENOMIC DNA]</scope>
    <source>
        <strain>AX4</strain>
    </source>
</reference>
<name>CTSB_DICDI</name>
<comment type="function">
    <text evidence="1">Thiol protease which is believed to participate in intracellular degradation and turnover of proteins.</text>
</comment>
<comment type="catalytic activity">
    <reaction>
        <text>Hydrolysis of proteins with broad specificity for peptide bonds. Preferentially cleaves -Arg-Arg-|-Xaa bonds in small molecule substrates (thus differing from cathepsin L). In addition to being an endopeptidase, shows peptidyl-dipeptidase activity, liberating C-terminal dipeptides.</text>
        <dbReference type="EC" id="3.4.22.1"/>
    </reaction>
</comment>
<comment type="subcellular location">
    <subcellularLocation>
        <location evidence="1">Lysosome</location>
    </subcellularLocation>
</comment>
<comment type="similarity">
    <text evidence="3 4">Belongs to the peptidase C1 family.</text>
</comment>
<dbReference type="EC" id="3.4.22.1"/>
<dbReference type="EMBL" id="AAFI02000058">
    <property type="protein sequence ID" value="EAL65448.1"/>
    <property type="molecule type" value="Genomic_DNA"/>
</dbReference>
<dbReference type="RefSeq" id="XP_638805.1">
    <property type="nucleotide sequence ID" value="XM_633713.1"/>
</dbReference>
<dbReference type="SMR" id="Q54QD9"/>
<dbReference type="FunCoup" id="Q54QD9">
    <property type="interactions" value="52"/>
</dbReference>
<dbReference type="STRING" id="44689.Q54QD9"/>
<dbReference type="MEROPS" id="C01.A59"/>
<dbReference type="GlyCosmos" id="Q54QD9">
    <property type="glycosylation" value="3 sites, No reported glycans"/>
</dbReference>
<dbReference type="GlyGen" id="Q54QD9">
    <property type="glycosylation" value="3 sites"/>
</dbReference>
<dbReference type="PaxDb" id="44689-DDB0233997"/>
<dbReference type="EnsemblProtists" id="EAL65448">
    <property type="protein sequence ID" value="EAL65448"/>
    <property type="gene ID" value="DDB_G0283921"/>
</dbReference>
<dbReference type="GeneID" id="8624329"/>
<dbReference type="KEGG" id="ddi:DDB_G0283921"/>
<dbReference type="dictyBase" id="DDB_G0283921">
    <property type="gene designation" value="ctsB"/>
</dbReference>
<dbReference type="VEuPathDB" id="AmoebaDB:DDB_G0283921"/>
<dbReference type="eggNOG" id="KOG1543">
    <property type="taxonomic scope" value="Eukaryota"/>
</dbReference>
<dbReference type="HOGENOM" id="CLU_012184_3_3_1"/>
<dbReference type="InParanoid" id="Q54QD9"/>
<dbReference type="OMA" id="DEKIPYW"/>
<dbReference type="PhylomeDB" id="Q54QD9"/>
<dbReference type="Reactome" id="R-DDI-2132295">
    <property type="pathway name" value="MHC class II antigen presentation"/>
</dbReference>
<dbReference type="Reactome" id="R-DDI-6798695">
    <property type="pathway name" value="Neutrophil degranulation"/>
</dbReference>
<dbReference type="PRO" id="PR:Q54QD9"/>
<dbReference type="Proteomes" id="UP000002195">
    <property type="component" value="Chromosome 4"/>
</dbReference>
<dbReference type="GO" id="GO:0005615">
    <property type="term" value="C:extracellular space"/>
    <property type="evidence" value="ECO:0000318"/>
    <property type="project" value="GO_Central"/>
</dbReference>
<dbReference type="GO" id="GO:0005764">
    <property type="term" value="C:lysosome"/>
    <property type="evidence" value="ECO:0000318"/>
    <property type="project" value="GO_Central"/>
</dbReference>
<dbReference type="GO" id="GO:0004197">
    <property type="term" value="F:cysteine-type endopeptidase activity"/>
    <property type="evidence" value="ECO:0000318"/>
    <property type="project" value="GO_Central"/>
</dbReference>
<dbReference type="GO" id="GO:0051603">
    <property type="term" value="P:proteolysis involved in protein catabolic process"/>
    <property type="evidence" value="ECO:0000318"/>
    <property type="project" value="GO_Central"/>
</dbReference>
<dbReference type="CDD" id="cd02620">
    <property type="entry name" value="Peptidase_C1A_CathepsinB"/>
    <property type="match status" value="1"/>
</dbReference>
<dbReference type="FunFam" id="3.90.70.10:FF:000081">
    <property type="entry name" value="cathepsin B-like protease 2"/>
    <property type="match status" value="1"/>
</dbReference>
<dbReference type="Gene3D" id="3.90.70.10">
    <property type="entry name" value="Cysteine proteinases"/>
    <property type="match status" value="1"/>
</dbReference>
<dbReference type="InterPro" id="IPR038765">
    <property type="entry name" value="Papain-like_cys_pep_sf"/>
</dbReference>
<dbReference type="InterPro" id="IPR000169">
    <property type="entry name" value="Pept_cys_AS"/>
</dbReference>
<dbReference type="InterPro" id="IPR025660">
    <property type="entry name" value="Pept_his_AS"/>
</dbReference>
<dbReference type="InterPro" id="IPR013128">
    <property type="entry name" value="Peptidase_C1A"/>
</dbReference>
<dbReference type="InterPro" id="IPR000668">
    <property type="entry name" value="Peptidase_C1A_C"/>
</dbReference>
<dbReference type="PANTHER" id="PTHR12411">
    <property type="entry name" value="CYSTEINE PROTEASE FAMILY C1-RELATED"/>
    <property type="match status" value="1"/>
</dbReference>
<dbReference type="Pfam" id="PF00112">
    <property type="entry name" value="Peptidase_C1"/>
    <property type="match status" value="1"/>
</dbReference>
<dbReference type="SMART" id="SM00645">
    <property type="entry name" value="Pept_C1"/>
    <property type="match status" value="1"/>
</dbReference>
<dbReference type="SUPFAM" id="SSF54001">
    <property type="entry name" value="Cysteine proteinases"/>
    <property type="match status" value="1"/>
</dbReference>
<dbReference type="PROSITE" id="PS00139">
    <property type="entry name" value="THIOL_PROTEASE_CYS"/>
    <property type="match status" value="1"/>
</dbReference>
<dbReference type="PROSITE" id="PS00639">
    <property type="entry name" value="THIOL_PROTEASE_HIS"/>
    <property type="match status" value="1"/>
</dbReference>
<proteinExistence type="inferred from homology"/>
<keyword id="KW-1015">Disulfide bond</keyword>
<keyword id="KW-0325">Glycoprotein</keyword>
<keyword id="KW-0378">Hydrolase</keyword>
<keyword id="KW-0458">Lysosome</keyword>
<keyword id="KW-0645">Protease</keyword>
<keyword id="KW-1185">Reference proteome</keyword>
<keyword id="KW-0732">Signal</keyword>
<keyword id="KW-0788">Thiol protease</keyword>
<keyword id="KW-0865">Zymogen</keyword>
<feature type="signal peptide" evidence="2">
    <location>
        <begin position="1"/>
        <end position="19"/>
    </location>
</feature>
<feature type="propeptide" id="PRO_0000330869" evidence="1">
    <location>
        <begin position="20"/>
        <end position="78"/>
    </location>
</feature>
<feature type="chain" id="PRO_0000330870" description="Cathepsin B">
    <location>
        <begin position="79"/>
        <end position="311"/>
    </location>
</feature>
<feature type="active site" evidence="1">
    <location>
        <position position="107"/>
    </location>
</feature>
<feature type="active site" evidence="1">
    <location>
        <position position="261"/>
    </location>
</feature>
<feature type="active site" evidence="1">
    <location>
        <position position="281"/>
    </location>
</feature>
<feature type="glycosylation site" description="N-linked (GlcNAc...) asparagine" evidence="2">
    <location>
        <position position="91"/>
    </location>
</feature>
<feature type="glycosylation site" description="N-linked (GlcNAc...) asparagine" evidence="2">
    <location>
        <position position="198"/>
    </location>
</feature>
<feature type="glycosylation site" description="N-linked (GlcNAc...) asparagine" evidence="2">
    <location>
        <position position="290"/>
    </location>
</feature>
<feature type="disulfide bond" evidence="1">
    <location>
        <begin position="92"/>
        <end position="121"/>
    </location>
</feature>
<feature type="disulfide bond" evidence="1">
    <location>
        <begin position="104"/>
        <end position="145"/>
    </location>
</feature>
<feature type="disulfide bond" evidence="1">
    <location>
        <begin position="138"/>
        <end position="191"/>
    </location>
</feature>
<feature type="disulfide bond" evidence="1">
    <location>
        <begin position="167"/>
        <end position="195"/>
    </location>
</feature>
<feature type="disulfide bond" evidence="1">
    <location>
        <begin position="175"/>
        <end position="182"/>
    </location>
</feature>
<gene>
    <name type="primary">ctsB</name>
    <name type="ORF">DDB_G0283921</name>
</gene>
<protein>
    <recommendedName>
        <fullName>Cathepsin B</fullName>
        <ecNumber>3.4.22.1</ecNumber>
    </recommendedName>
    <alternativeName>
        <fullName>Cathepsin B1</fullName>
    </alternativeName>
</protein>
<evidence type="ECO:0000250" key="1"/>
<evidence type="ECO:0000255" key="2"/>
<evidence type="ECO:0000255" key="3">
    <source>
        <dbReference type="PROSITE-ProRule" id="PRU10088"/>
    </source>
</evidence>
<evidence type="ECO:0000255" key="4">
    <source>
        <dbReference type="PROSITE-ProRule" id="PRU10089"/>
    </source>
</evidence>
<organism>
    <name type="scientific">Dictyostelium discoideum</name>
    <name type="common">Social amoeba</name>
    <dbReference type="NCBI Taxonomy" id="44689"/>
    <lineage>
        <taxon>Eukaryota</taxon>
        <taxon>Amoebozoa</taxon>
        <taxon>Evosea</taxon>
        <taxon>Eumycetozoa</taxon>
        <taxon>Dictyostelia</taxon>
        <taxon>Dictyosteliales</taxon>
        <taxon>Dictyosteliaceae</taxon>
        <taxon>Dictyostelium</taxon>
    </lineage>
</organism>
<accession>Q54QD9</accession>
<sequence>MRVLLSLVVILFIINSAFAVKINIGRPTKSHKTIHHETWVEEQTDQFDNIKVGQLLGFKRSPNRPKLQIKSYDPLGVQIPTSFNAQTNWPNCTTISQIQNQARCGSCWAFGATESATDRLCIHNNENVQLSFMDMVTCDETDNGCEGGDAFSAWNWLRKQGAVSEECLPYTIPTCPPAQQPCLNFVNTPSCTKECQSNSSLIYSQDKHKMAKIYSFDSDEAIMQEIVTNGPVEACFTVFEDFLAYKSGVYVHTTGKDLGGHCVKLVGFGTLNGVDYYAANNQWTTSWGDNGTFLIKRGDCGISDDVVAGLP</sequence>